<protein>
    <recommendedName>
        <fullName>Signal transduction protein TRAP</fullName>
    </recommendedName>
    <alternativeName>
        <fullName>Target of RNAIII-activating protein</fullName>
    </alternativeName>
</protein>
<name>TRAP_STAEP</name>
<dbReference type="EMBL" id="AF331164">
    <property type="protein sequence ID" value="AAN31185.1"/>
    <property type="molecule type" value="Genomic_DNA"/>
</dbReference>
<dbReference type="RefSeq" id="WP_001829811.1">
    <property type="nucleotide sequence ID" value="NZ_WLVA01000001.1"/>
</dbReference>
<dbReference type="SMR" id="Q8GQQ1"/>
<dbReference type="GeneID" id="50018411"/>
<dbReference type="OrthoDB" id="2352283at2"/>
<dbReference type="GO" id="GO:0016020">
    <property type="term" value="C:membrane"/>
    <property type="evidence" value="ECO:0007669"/>
    <property type="project" value="UniProtKB-SubCell"/>
</dbReference>
<dbReference type="Gene3D" id="3.30.70.100">
    <property type="match status" value="1"/>
</dbReference>
<dbReference type="InterPro" id="IPR007138">
    <property type="entry name" value="ABM_dom"/>
</dbReference>
<dbReference type="InterPro" id="IPR011008">
    <property type="entry name" value="Dimeric_a/b-barrel"/>
</dbReference>
<dbReference type="InterPro" id="IPR050404">
    <property type="entry name" value="Heme-degrading_MO"/>
</dbReference>
<dbReference type="PANTHER" id="PTHR34474">
    <property type="entry name" value="SIGNAL TRANSDUCTION PROTEIN TRAP"/>
    <property type="match status" value="1"/>
</dbReference>
<dbReference type="PANTHER" id="PTHR34474:SF2">
    <property type="entry name" value="SIGNAL TRANSDUCTION PROTEIN TRAP"/>
    <property type="match status" value="1"/>
</dbReference>
<dbReference type="Pfam" id="PF03992">
    <property type="entry name" value="ABM"/>
    <property type="match status" value="1"/>
</dbReference>
<dbReference type="SUPFAM" id="SSF54909">
    <property type="entry name" value="Dimeric alpha+beta barrel"/>
    <property type="match status" value="1"/>
</dbReference>
<dbReference type="PROSITE" id="PS51725">
    <property type="entry name" value="ABM"/>
    <property type="match status" value="1"/>
</dbReference>
<feature type="chain" id="PRO_0000289345" description="Signal transduction protein TRAP">
    <location>
        <begin position="1"/>
        <end position="167"/>
    </location>
</feature>
<feature type="domain" description="ABM">
    <location>
        <begin position="66"/>
        <end position="157"/>
    </location>
</feature>
<feature type="modified residue" description="Phosphohistidine" evidence="1">
    <location>
        <position position="65"/>
    </location>
</feature>
<feature type="modified residue" description="Phosphohistidine" evidence="1">
    <location>
        <position position="78"/>
    </location>
</feature>
<feature type="modified residue" description="Phosphohistidine" evidence="1">
    <location>
        <position position="153"/>
    </location>
</feature>
<accession>Q8GQQ1</accession>
<reference key="1">
    <citation type="submission" date="2000-12" db="EMBL/GenBank/DDBJ databases">
        <title>TRAP, a signal transducer in Staphylococcus epidermidis.</title>
        <authorList>
            <person name="Balaban N."/>
        </authorList>
    </citation>
    <scope>NUCLEOTIDE SEQUENCE [GENOMIC DNA]</scope>
</reference>
<reference key="2">
    <citation type="journal article" date="2003" name="J. Infect. Dis.">
        <title>Use of the quorum-sensing inhibitor RNAIII-inhibiting peptide to prevent biofilm formation in vivo by drug-resistant Staphylococcus epidermidis.</title>
        <authorList>
            <person name="Balaban N."/>
            <person name="Giacometti A."/>
            <person name="Cirioni O."/>
            <person name="Gov Y."/>
            <person name="Ghiselli R."/>
            <person name="Mocchegiani F."/>
            <person name="Viticchi C."/>
            <person name="Del Prete M.S."/>
            <person name="Saba V."/>
            <person name="Scalise G."/>
            <person name="Dell'Acqua G."/>
        </authorList>
    </citation>
    <scope>RIP INHIBITION OF TRAP PHOSPHORYLATION</scope>
    <source>
        <strain>Clinical isolate</strain>
    </source>
</reference>
<comment type="function">
    <text evidence="1">Contributes to virulence and biofilm formation.</text>
</comment>
<comment type="subcellular location">
    <subcellularLocation>
        <location>Membrane</location>
    </subcellularLocation>
    <text evidence="1">Membrane-associated.</text>
</comment>
<comment type="PTM">
    <text evidence="1">Each of the three conserved histidine residues contributes to TRAP phosphorylation. Phosphorylation is essential for TRAP activity (By similarity).</text>
</comment>
<comment type="PTM">
    <text>RIP inhibits TRAP phosphorylation.</text>
</comment>
<comment type="similarity">
    <text evidence="2">Belongs to the TRAP family.</text>
</comment>
<proteinExistence type="evidence at protein level"/>
<gene>
    <name type="primary">traP</name>
</gene>
<keyword id="KW-0472">Membrane</keyword>
<keyword id="KW-0597">Phosphoprotein</keyword>
<keyword id="KW-0843">Virulence</keyword>
<organism>
    <name type="scientific">Staphylococcus epidermidis</name>
    <dbReference type="NCBI Taxonomy" id="1282"/>
    <lineage>
        <taxon>Bacteria</taxon>
        <taxon>Bacillati</taxon>
        <taxon>Bacillota</taxon>
        <taxon>Bacilli</taxon>
        <taxon>Bacillales</taxon>
        <taxon>Staphylococcaceae</taxon>
        <taxon>Staphylococcus</taxon>
    </lineage>
</organism>
<evidence type="ECO:0000250" key="1"/>
<evidence type="ECO:0000305" key="2"/>
<sequence length="167" mass="19529">MYLYTSYGTYQFLNQIKLNHQERSLFQFSTNDSSIILEESEGKSILKHPSSYQVIDSTGEFNEHHFYSAIFVPTSEDHRQQLEKKLLHVDVPLSNFGGFKSYRLLKPTEGSTYKIYFGFANRTAYEDFKASDIFNENFSKDALSQYFGASGQHSSYFERYLYPIEDH</sequence>